<organism>
    <name type="scientific">Cryptococcus neoformans var. neoformans serotype D (strain JEC21 / ATCC MYA-565)</name>
    <name type="common">Filobasidiella neoformans</name>
    <dbReference type="NCBI Taxonomy" id="214684"/>
    <lineage>
        <taxon>Eukaryota</taxon>
        <taxon>Fungi</taxon>
        <taxon>Dikarya</taxon>
        <taxon>Basidiomycota</taxon>
        <taxon>Agaricomycotina</taxon>
        <taxon>Tremellomycetes</taxon>
        <taxon>Tremellales</taxon>
        <taxon>Cryptococcaceae</taxon>
        <taxon>Cryptococcus</taxon>
        <taxon>Cryptococcus neoformans species complex</taxon>
    </lineage>
</organism>
<comment type="function">
    <text evidence="1">RNA-binding component of the eukaryotic translation initiation factor 3 (eIF-3) complex, which is involved in protein synthesis of a specialized repertoire of mRNAs and, together with other initiation factors, stimulates binding of mRNA and methionyl-tRNAi to the 40S ribosome. The eIF-3 complex specifically targets and initiates translation of a subset of mRNAs involved in cell proliferation. This subunit can bind 18S rRNA.</text>
</comment>
<comment type="subunit">
    <text evidence="1">Component of the eukaryotic translation initiation factor 3 (eIF-3) complex.</text>
</comment>
<comment type="subcellular location">
    <subcellularLocation>
        <location evidence="1">Cytoplasm</location>
    </subcellularLocation>
</comment>
<comment type="similarity">
    <text evidence="1">Belongs to the eIF-3 subunit G family.</text>
</comment>
<accession>P0CN52</accession>
<accession>Q55JX6</accession>
<accession>Q5K9M4</accession>
<gene>
    <name evidence="1" type="primary">TIF35</name>
    <name type="ordered locus">CNK01460</name>
</gene>
<name>EIF3G_CRYNJ</name>
<sequence>MADSKQSNRDWAADDVDADELPPTTESTDANGITTIVSWKYNADDQKVKVTRRVRRRLQVSTVTQTMAERKQWPKFGLDKGKPPGPDRKTTIIGENLHFKIAPISKIQRVEPEPETAVKAPTGKAVVCRLCSGQHYTARCPFREQLAAIDNLNADGAEEEQVVVSGTLAAKGAGETGGKYVPPSQRAGATGAGDSMFRARDELPTLRVTSLSIDAEEDDLRALFQPFAKNGKLGRANIVRDRNTRVSKGLAFVSFESKRDAEAAMAHLNGRGYDSLILEVAWSQPRGERT</sequence>
<evidence type="ECO:0000255" key="1">
    <source>
        <dbReference type="HAMAP-Rule" id="MF_03006"/>
    </source>
</evidence>
<evidence type="ECO:0000256" key="2">
    <source>
        <dbReference type="SAM" id="MobiDB-lite"/>
    </source>
</evidence>
<protein>
    <recommendedName>
        <fullName evidence="1">Eukaryotic translation initiation factor 3 subunit G</fullName>
        <shortName evidence="1">eIF3g</shortName>
    </recommendedName>
    <alternativeName>
        <fullName evidence="1">Eukaryotic translation initiation factor 3 RNA-binding subunit</fullName>
        <shortName evidence="1">eIF-3 RNA-binding subunit</shortName>
    </alternativeName>
    <alternativeName>
        <fullName evidence="1">Translation initiation factor eIF3 p33 subunit homolog</fullName>
        <shortName evidence="1">eIF3 p33 homolog</shortName>
    </alternativeName>
</protein>
<feature type="chain" id="PRO_0000365442" description="Eukaryotic translation initiation factor 3 subunit G">
    <location>
        <begin position="1"/>
        <end position="290"/>
    </location>
</feature>
<feature type="domain" description="RRM" evidence="1">
    <location>
        <begin position="204"/>
        <end position="285"/>
    </location>
</feature>
<feature type="region of interest" description="Disordered" evidence="2">
    <location>
        <begin position="1"/>
        <end position="30"/>
    </location>
</feature>
<feature type="region of interest" description="Disordered" evidence="2">
    <location>
        <begin position="173"/>
        <end position="192"/>
    </location>
</feature>
<feature type="compositionally biased region" description="Basic and acidic residues" evidence="2">
    <location>
        <begin position="1"/>
        <end position="12"/>
    </location>
</feature>
<proteinExistence type="inferred from homology"/>
<keyword id="KW-0963">Cytoplasm</keyword>
<keyword id="KW-0396">Initiation factor</keyword>
<keyword id="KW-0648">Protein biosynthesis</keyword>
<keyword id="KW-1185">Reference proteome</keyword>
<keyword id="KW-0694">RNA-binding</keyword>
<reference key="1">
    <citation type="journal article" date="2005" name="Science">
        <title>The genome of the basidiomycetous yeast and human pathogen Cryptococcus neoformans.</title>
        <authorList>
            <person name="Loftus B.J."/>
            <person name="Fung E."/>
            <person name="Roncaglia P."/>
            <person name="Rowley D."/>
            <person name="Amedeo P."/>
            <person name="Bruno D."/>
            <person name="Vamathevan J."/>
            <person name="Miranda M."/>
            <person name="Anderson I.J."/>
            <person name="Fraser J.A."/>
            <person name="Allen J.E."/>
            <person name="Bosdet I.E."/>
            <person name="Brent M.R."/>
            <person name="Chiu R."/>
            <person name="Doering T.L."/>
            <person name="Donlin M.J."/>
            <person name="D'Souza C.A."/>
            <person name="Fox D.S."/>
            <person name="Grinberg V."/>
            <person name="Fu J."/>
            <person name="Fukushima M."/>
            <person name="Haas B.J."/>
            <person name="Huang J.C."/>
            <person name="Janbon G."/>
            <person name="Jones S.J.M."/>
            <person name="Koo H.L."/>
            <person name="Krzywinski M.I."/>
            <person name="Kwon-Chung K.J."/>
            <person name="Lengeler K.B."/>
            <person name="Maiti R."/>
            <person name="Marra M.A."/>
            <person name="Marra R.E."/>
            <person name="Mathewson C.A."/>
            <person name="Mitchell T.G."/>
            <person name="Pertea M."/>
            <person name="Riggs F.R."/>
            <person name="Salzberg S.L."/>
            <person name="Schein J.E."/>
            <person name="Shvartsbeyn A."/>
            <person name="Shin H."/>
            <person name="Shumway M."/>
            <person name="Specht C.A."/>
            <person name="Suh B.B."/>
            <person name="Tenney A."/>
            <person name="Utterback T.R."/>
            <person name="Wickes B.L."/>
            <person name="Wortman J.R."/>
            <person name="Wye N.H."/>
            <person name="Kronstad J.W."/>
            <person name="Lodge J.K."/>
            <person name="Heitman J."/>
            <person name="Davis R.W."/>
            <person name="Fraser C.M."/>
            <person name="Hyman R.W."/>
        </authorList>
    </citation>
    <scope>NUCLEOTIDE SEQUENCE [LARGE SCALE GENOMIC DNA]</scope>
    <source>
        <strain>JEC21 / ATCC MYA-565</strain>
    </source>
</reference>
<dbReference type="EMBL" id="AE017351">
    <property type="protein sequence ID" value="AAW46307.1"/>
    <property type="molecule type" value="Genomic_DNA"/>
</dbReference>
<dbReference type="RefSeq" id="XP_567824.1">
    <property type="nucleotide sequence ID" value="XM_567824.1"/>
</dbReference>
<dbReference type="SMR" id="P0CN52"/>
<dbReference type="FunCoup" id="P0CN52">
    <property type="interactions" value="557"/>
</dbReference>
<dbReference type="STRING" id="214684.P0CN52"/>
<dbReference type="PaxDb" id="214684-P0CN52"/>
<dbReference type="EnsemblFungi" id="AAW46307">
    <property type="protein sequence ID" value="AAW46307"/>
    <property type="gene ID" value="CNK01460"/>
</dbReference>
<dbReference type="GeneID" id="3254615"/>
<dbReference type="KEGG" id="cne:CNK01460"/>
<dbReference type="VEuPathDB" id="FungiDB:CNK01460"/>
<dbReference type="eggNOG" id="KOG0122">
    <property type="taxonomic scope" value="Eukaryota"/>
</dbReference>
<dbReference type="HOGENOM" id="CLU_034595_0_0_1"/>
<dbReference type="InParanoid" id="P0CN52"/>
<dbReference type="OMA" id="ICQGDHF"/>
<dbReference type="OrthoDB" id="639027at2759"/>
<dbReference type="Proteomes" id="UP000002149">
    <property type="component" value="Chromosome 11"/>
</dbReference>
<dbReference type="GO" id="GO:0016282">
    <property type="term" value="C:eukaryotic 43S preinitiation complex"/>
    <property type="evidence" value="ECO:0007669"/>
    <property type="project" value="UniProtKB-UniRule"/>
</dbReference>
<dbReference type="GO" id="GO:0033290">
    <property type="term" value="C:eukaryotic 48S preinitiation complex"/>
    <property type="evidence" value="ECO:0007669"/>
    <property type="project" value="UniProtKB-UniRule"/>
</dbReference>
<dbReference type="GO" id="GO:0071540">
    <property type="term" value="C:eukaryotic translation initiation factor 3 complex, eIF3e"/>
    <property type="evidence" value="ECO:0007669"/>
    <property type="project" value="EnsemblFungi"/>
</dbReference>
<dbReference type="GO" id="GO:0071541">
    <property type="term" value="C:eukaryotic translation initiation factor 3 complex, eIF3m"/>
    <property type="evidence" value="ECO:0007669"/>
    <property type="project" value="EnsemblFungi"/>
</dbReference>
<dbReference type="GO" id="GO:0043614">
    <property type="term" value="C:multi-eIF complex"/>
    <property type="evidence" value="ECO:0007669"/>
    <property type="project" value="EnsemblFungi"/>
</dbReference>
<dbReference type="GO" id="GO:0003723">
    <property type="term" value="F:RNA binding"/>
    <property type="evidence" value="ECO:0007669"/>
    <property type="project" value="UniProtKB-UniRule"/>
</dbReference>
<dbReference type="GO" id="GO:0003743">
    <property type="term" value="F:translation initiation factor activity"/>
    <property type="evidence" value="ECO:0007669"/>
    <property type="project" value="UniProtKB-UniRule"/>
</dbReference>
<dbReference type="GO" id="GO:0001732">
    <property type="term" value="P:formation of cytoplasmic translation initiation complex"/>
    <property type="evidence" value="ECO:0007669"/>
    <property type="project" value="UniProtKB-UniRule"/>
</dbReference>
<dbReference type="GO" id="GO:0002188">
    <property type="term" value="P:translation reinitiation"/>
    <property type="evidence" value="ECO:0007669"/>
    <property type="project" value="EnsemblFungi"/>
</dbReference>
<dbReference type="GO" id="GO:0006415">
    <property type="term" value="P:translational termination"/>
    <property type="evidence" value="ECO:0007669"/>
    <property type="project" value="EnsemblFungi"/>
</dbReference>
<dbReference type="CDD" id="cd12933">
    <property type="entry name" value="eIF3G"/>
    <property type="match status" value="1"/>
</dbReference>
<dbReference type="CDD" id="cd12408">
    <property type="entry name" value="RRM_eIF3G_like"/>
    <property type="match status" value="1"/>
</dbReference>
<dbReference type="FunFam" id="3.30.70.330:FF:000657">
    <property type="entry name" value="Eukaryotic translation initiation factor 3 subunit G"/>
    <property type="match status" value="1"/>
</dbReference>
<dbReference type="Gene3D" id="3.30.70.330">
    <property type="match status" value="1"/>
</dbReference>
<dbReference type="HAMAP" id="MF_03006">
    <property type="entry name" value="eIF3g"/>
    <property type="match status" value="1"/>
</dbReference>
<dbReference type="InterPro" id="IPR017334">
    <property type="entry name" value="eIF3_g"/>
</dbReference>
<dbReference type="InterPro" id="IPR024675">
    <property type="entry name" value="eIF3g_N"/>
</dbReference>
<dbReference type="InterPro" id="IPR034240">
    <property type="entry name" value="eIF3G_RRM"/>
</dbReference>
<dbReference type="InterPro" id="IPR012677">
    <property type="entry name" value="Nucleotide-bd_a/b_plait_sf"/>
</dbReference>
<dbReference type="InterPro" id="IPR035979">
    <property type="entry name" value="RBD_domain_sf"/>
</dbReference>
<dbReference type="InterPro" id="IPR000504">
    <property type="entry name" value="RRM_dom"/>
</dbReference>
<dbReference type="PANTHER" id="PTHR10352">
    <property type="entry name" value="EUKARYOTIC TRANSLATION INITIATION FACTOR 3 SUBUNIT G"/>
    <property type="match status" value="1"/>
</dbReference>
<dbReference type="Pfam" id="PF12353">
    <property type="entry name" value="eIF3g"/>
    <property type="match status" value="1"/>
</dbReference>
<dbReference type="Pfam" id="PF00076">
    <property type="entry name" value="RRM_1"/>
    <property type="match status" value="1"/>
</dbReference>
<dbReference type="PIRSF" id="PIRSF037949">
    <property type="entry name" value="Transl_init_eIF-3_RNA-bind"/>
    <property type="match status" value="1"/>
</dbReference>
<dbReference type="SMART" id="SM00360">
    <property type="entry name" value="RRM"/>
    <property type="match status" value="1"/>
</dbReference>
<dbReference type="SUPFAM" id="SSF54928">
    <property type="entry name" value="RNA-binding domain, RBD"/>
    <property type="match status" value="1"/>
</dbReference>
<dbReference type="PROSITE" id="PS50102">
    <property type="entry name" value="RRM"/>
    <property type="match status" value="1"/>
</dbReference>